<reference key="1">
    <citation type="journal article" date="2004" name="Proc. Natl. Acad. Sci. U.S.A.">
        <title>Complete genomes of two clinical Staphylococcus aureus strains: evidence for the rapid evolution of virulence and drug resistance.</title>
        <authorList>
            <person name="Holden M.T.G."/>
            <person name="Feil E.J."/>
            <person name="Lindsay J.A."/>
            <person name="Peacock S.J."/>
            <person name="Day N.P.J."/>
            <person name="Enright M.C."/>
            <person name="Foster T.J."/>
            <person name="Moore C.E."/>
            <person name="Hurst L."/>
            <person name="Atkin R."/>
            <person name="Barron A."/>
            <person name="Bason N."/>
            <person name="Bentley S.D."/>
            <person name="Chillingworth C."/>
            <person name="Chillingworth T."/>
            <person name="Churcher C."/>
            <person name="Clark L."/>
            <person name="Corton C."/>
            <person name="Cronin A."/>
            <person name="Doggett J."/>
            <person name="Dowd L."/>
            <person name="Feltwell T."/>
            <person name="Hance Z."/>
            <person name="Harris B."/>
            <person name="Hauser H."/>
            <person name="Holroyd S."/>
            <person name="Jagels K."/>
            <person name="James K.D."/>
            <person name="Lennard N."/>
            <person name="Line A."/>
            <person name="Mayes R."/>
            <person name="Moule S."/>
            <person name="Mungall K."/>
            <person name="Ormond D."/>
            <person name="Quail M.A."/>
            <person name="Rabbinowitsch E."/>
            <person name="Rutherford K.M."/>
            <person name="Sanders M."/>
            <person name="Sharp S."/>
            <person name="Simmonds M."/>
            <person name="Stevens K."/>
            <person name="Whitehead S."/>
            <person name="Barrell B.G."/>
            <person name="Spratt B.G."/>
            <person name="Parkhill J."/>
        </authorList>
    </citation>
    <scope>NUCLEOTIDE SEQUENCE [LARGE SCALE GENOMIC DNA]</scope>
    <source>
        <strain>MSSA476</strain>
    </source>
</reference>
<comment type="function">
    <text evidence="1">Cell surface-associated calcium-binding protein which plays an important role in adhesion and pathogenesis. Mediates interactions with components of the extracellular matrix such as host NRXN1 to promote bacterial adhesion.</text>
</comment>
<comment type="subunit">
    <text evidence="1">Homodimerizes; via N2-Domain. Interacts with host NRXN1; this interaction mediates bacterial attachment to host cells.</text>
</comment>
<comment type="subcellular location">
    <subcellularLocation>
        <location evidence="3">Secreted</location>
        <location evidence="3">Cell wall</location>
        <topology evidence="3">Peptidoglycan-anchor</topology>
    </subcellularLocation>
</comment>
<comment type="similarity">
    <text evidence="5">Belongs to the serine-aspartate repeat-containing protein (SDr) family.</text>
</comment>
<name>SDRC_STAAS</name>
<protein>
    <recommendedName>
        <fullName>Serine-aspartate repeat-containing protein C</fullName>
    </recommendedName>
</protein>
<proteinExistence type="inferred from homology"/>
<organism>
    <name type="scientific">Staphylococcus aureus (strain MSSA476)</name>
    <dbReference type="NCBI Taxonomy" id="282459"/>
    <lineage>
        <taxon>Bacteria</taxon>
        <taxon>Bacillati</taxon>
        <taxon>Bacillota</taxon>
        <taxon>Bacilli</taxon>
        <taxon>Bacillales</taxon>
        <taxon>Staphylococcaceae</taxon>
        <taxon>Staphylococcus</taxon>
    </lineage>
</organism>
<accession>Q6GBS6</accession>
<gene>
    <name type="primary">sdrC</name>
    <name type="ordered locus">SAS0519</name>
</gene>
<dbReference type="EMBL" id="BX571857">
    <property type="protein sequence ID" value="CAG42294.1"/>
    <property type="molecule type" value="Genomic_DNA"/>
</dbReference>
<dbReference type="RefSeq" id="WP_001060528.1">
    <property type="nucleotide sequence ID" value="NC_002953.3"/>
</dbReference>
<dbReference type="SMR" id="Q6GBS6"/>
<dbReference type="KEGG" id="sas:SAS0519"/>
<dbReference type="HOGENOM" id="CLU_004137_1_2_9"/>
<dbReference type="PRO" id="PR:Q6GBS6"/>
<dbReference type="GO" id="GO:0005576">
    <property type="term" value="C:extracellular region"/>
    <property type="evidence" value="ECO:0007669"/>
    <property type="project" value="UniProtKB-KW"/>
</dbReference>
<dbReference type="GO" id="GO:0007155">
    <property type="term" value="P:cell adhesion"/>
    <property type="evidence" value="ECO:0007669"/>
    <property type="project" value="InterPro"/>
</dbReference>
<dbReference type="Gene3D" id="2.60.40.1280">
    <property type="match status" value="1"/>
</dbReference>
<dbReference type="Gene3D" id="2.60.40.1290">
    <property type="match status" value="1"/>
</dbReference>
<dbReference type="Gene3D" id="2.60.40.10">
    <property type="entry name" value="Immunoglobulins"/>
    <property type="match status" value="2"/>
</dbReference>
<dbReference type="InterPro" id="IPR011266">
    <property type="entry name" value="Adhesin_Fg-bd_dom_2"/>
</dbReference>
<dbReference type="InterPro" id="IPR008966">
    <property type="entry name" value="Adhesion_dom_sf"/>
</dbReference>
<dbReference type="InterPro" id="IPR011252">
    <property type="entry name" value="Fibrogen-bd_dom1"/>
</dbReference>
<dbReference type="InterPro" id="IPR013783">
    <property type="entry name" value="Ig-like_fold"/>
</dbReference>
<dbReference type="InterPro" id="IPR019931">
    <property type="entry name" value="LPXTG_anchor"/>
</dbReference>
<dbReference type="InterPro" id="IPR050972">
    <property type="entry name" value="SDr-like"/>
</dbReference>
<dbReference type="InterPro" id="IPR033764">
    <property type="entry name" value="Sdr_B"/>
</dbReference>
<dbReference type="InterPro" id="IPR041171">
    <property type="entry name" value="SDR_Ig"/>
</dbReference>
<dbReference type="InterPro" id="IPR005877">
    <property type="entry name" value="YSIRK_signal_dom"/>
</dbReference>
<dbReference type="NCBIfam" id="TIGR01167">
    <property type="entry name" value="LPXTG_anchor"/>
    <property type="match status" value="1"/>
</dbReference>
<dbReference type="NCBIfam" id="NF000535">
    <property type="entry name" value="MSCRAMM_SdrC"/>
    <property type="match status" value="1"/>
</dbReference>
<dbReference type="NCBIfam" id="TIGR01168">
    <property type="entry name" value="YSIRK_signal"/>
    <property type="match status" value="1"/>
</dbReference>
<dbReference type="PANTHER" id="PTHR34403">
    <property type="entry name" value="TOL-PAL SYSTEM PROTEIN TOLA"/>
    <property type="match status" value="1"/>
</dbReference>
<dbReference type="PANTHER" id="PTHR34403:SF8">
    <property type="entry name" value="TOL-PAL SYSTEM PROTEIN TOLA"/>
    <property type="match status" value="1"/>
</dbReference>
<dbReference type="Pfam" id="PF17961">
    <property type="entry name" value="Big_8"/>
    <property type="match status" value="1"/>
</dbReference>
<dbReference type="Pfam" id="PF00746">
    <property type="entry name" value="Gram_pos_anchor"/>
    <property type="match status" value="1"/>
</dbReference>
<dbReference type="Pfam" id="PF17210">
    <property type="entry name" value="SdrD_B"/>
    <property type="match status" value="2"/>
</dbReference>
<dbReference type="Pfam" id="PF10425">
    <property type="entry name" value="SdrG_C_C"/>
    <property type="match status" value="1"/>
</dbReference>
<dbReference type="Pfam" id="PF04650">
    <property type="entry name" value="YSIRK_signal"/>
    <property type="match status" value="1"/>
</dbReference>
<dbReference type="SUPFAM" id="SSF49401">
    <property type="entry name" value="Bacterial adhesins"/>
    <property type="match status" value="2"/>
</dbReference>
<dbReference type="SUPFAM" id="SSF117074">
    <property type="entry name" value="Hypothetical protein PA1324"/>
    <property type="match status" value="2"/>
</dbReference>
<dbReference type="PROSITE" id="PS50847">
    <property type="entry name" value="GRAM_POS_ANCHORING"/>
    <property type="match status" value="1"/>
</dbReference>
<evidence type="ECO:0000250" key="1">
    <source>
        <dbReference type="UniProtKB" id="O86487"/>
    </source>
</evidence>
<evidence type="ECO:0000255" key="2"/>
<evidence type="ECO:0000255" key="3">
    <source>
        <dbReference type="PROSITE-ProRule" id="PRU00477"/>
    </source>
</evidence>
<evidence type="ECO:0000256" key="4">
    <source>
        <dbReference type="SAM" id="MobiDB-lite"/>
    </source>
</evidence>
<evidence type="ECO:0000305" key="5"/>
<keyword id="KW-0106">Calcium</keyword>
<keyword id="KW-0134">Cell wall</keyword>
<keyword id="KW-0572">Peptidoglycan-anchor</keyword>
<keyword id="KW-0677">Repeat</keyword>
<keyword id="KW-0964">Secreted</keyword>
<keyword id="KW-0732">Signal</keyword>
<sequence>MNNKKTVTNRKGMIPNRLNKFSIRKYSVGTASILVGTTLIFGLSGHEAKAAEHTNGELNQSKNETTAPSENKTTEKVDSRQLKDNTQTATADQPKVTMSDSATVKETSSNMQSPQNATASQSTTQTSNVTTNDKSSTTYSNETDKSNLTQAKDVSATPKTTTIKPRTLNRMAVNTVAAPQQGTNVNDKVHFSNIDIAIDKGHLNKDTGKTEFWATSSDVLKLKANYTIDDSVKEGDTFTFKYGQYFRPGSVRLPSQTQNLYNAQGNIIAKGIYDSTTNTTTYTFTNYVDQYTNVSGSFEQVAFAKRENATTDKTAYKMEVSLGNDTYSEEIIVDYGNKKAQPLISSTNYINNEDLSRNMTAYVNQPKNTYTKQTFVTNLTGYKFNPNAKNFKIYEVTDQNQFVDSFTPDTSKLKDVTNQFNITYSNDNKTATVDLMNGQTSSNKQYIIQQVAYPDNTSTDNGKIDYTLDTDKTKYSWSNSYSNVNGSSTANGDQKKYNLGDYVWEDTNKDGKQDANEKGIKGVYVILKDSNGKELDRTTTDENGKYQFTGLSNGTYSVEFSTPAGYTPTTANAGTDDAVDSDGLTTTGVIKDADNMTLDSGFYKTPKYSLGDYVWYDSNKDGKQDSTEKGIKGVKVTLQNEKGEVIGTTETDENGKYRFDNLDSGKYKVIFEKPAGLTQTGTNTTEDDKDADGGEVDVTITDHDDFTLDNGYYEEETSDSDSDSDSDSDSDSDSDSDSDSDSDSDSDSDSDSDSDSDSDSDSDSDSDSDSDSDSDSDSDSDSDSDSDSDSDSDSDSDSDSDSDSDSDSDSDSDSDSDSDSDSDSDSDSDSDSDTDSDSDSDSDSDSDSDSDSDSDSDSDSDSDSDSDSDSDSDSDSDSDSDSDSESDADSDTDSDSDAGKHTPAKPMSTVKDQHKTAKALPETGSENNNSNNGTLFGGLFAALGSLLLFGRRKKQNK</sequence>
<feature type="signal peptide" evidence="2">
    <location>
        <begin position="1"/>
        <end position="50"/>
    </location>
</feature>
<feature type="chain" id="PRO_0000281398" description="Serine-aspartate repeat-containing protein C">
    <location>
        <begin position="51"/>
        <end position="923"/>
    </location>
</feature>
<feature type="propeptide" id="PRO_0000281399" description="Removed by sortase" evidence="3">
    <location>
        <begin position="924"/>
        <end position="957"/>
    </location>
</feature>
<feature type="domain" description="CNA-B 1">
    <location>
        <begin position="496"/>
        <end position="606"/>
    </location>
</feature>
<feature type="domain" description="CNA-B 2">
    <location>
        <begin position="607"/>
        <end position="717"/>
    </location>
</feature>
<feature type="region of interest" description="Ligand binding A region">
    <location>
        <begin position="51"/>
        <end position="495"/>
    </location>
</feature>
<feature type="region of interest" description="Disordered" evidence="4">
    <location>
        <begin position="51"/>
        <end position="166"/>
    </location>
</feature>
<feature type="region of interest" description="Disordered" evidence="4">
    <location>
        <begin position="678"/>
        <end position="937"/>
    </location>
</feature>
<feature type="short sequence motif" description="LPXTG sorting signal" evidence="3">
    <location>
        <begin position="920"/>
        <end position="924"/>
    </location>
</feature>
<feature type="compositionally biased region" description="Polar residues" evidence="4">
    <location>
        <begin position="56"/>
        <end position="71"/>
    </location>
</feature>
<feature type="compositionally biased region" description="Basic and acidic residues" evidence="4">
    <location>
        <begin position="72"/>
        <end position="83"/>
    </location>
</feature>
<feature type="compositionally biased region" description="Polar residues" evidence="4">
    <location>
        <begin position="84"/>
        <end position="114"/>
    </location>
</feature>
<feature type="compositionally biased region" description="Low complexity" evidence="4">
    <location>
        <begin position="115"/>
        <end position="132"/>
    </location>
</feature>
<feature type="compositionally biased region" description="Polar residues" evidence="4">
    <location>
        <begin position="133"/>
        <end position="164"/>
    </location>
</feature>
<feature type="compositionally biased region" description="Acidic residues" evidence="4">
    <location>
        <begin position="685"/>
        <end position="695"/>
    </location>
</feature>
<feature type="compositionally biased region" description="Acidic residues" evidence="4">
    <location>
        <begin position="712"/>
        <end position="896"/>
    </location>
</feature>
<feature type="compositionally biased region" description="Low complexity" evidence="4">
    <location>
        <begin position="922"/>
        <end position="937"/>
    </location>
</feature>
<feature type="modified residue" description="Pentaglycyl murein peptidoglycan amidated threonine" evidence="3">
    <location>
        <position position="923"/>
    </location>
</feature>